<accession>B1Y8Z1</accession>
<name>DCD_PYRNV</name>
<comment type="function">
    <text evidence="1">Catalyzes the deamination of dCTP to dUTP.</text>
</comment>
<comment type="catalytic activity">
    <reaction evidence="1">
        <text>dCTP + H2O + H(+) = dUTP + NH4(+)</text>
        <dbReference type="Rhea" id="RHEA:22680"/>
        <dbReference type="ChEBI" id="CHEBI:15377"/>
        <dbReference type="ChEBI" id="CHEBI:15378"/>
        <dbReference type="ChEBI" id="CHEBI:28938"/>
        <dbReference type="ChEBI" id="CHEBI:61481"/>
        <dbReference type="ChEBI" id="CHEBI:61555"/>
        <dbReference type="EC" id="3.5.4.13"/>
    </reaction>
</comment>
<comment type="pathway">
    <text evidence="1">Pyrimidine metabolism; dUMP biosynthesis; dUMP from dCTP (dUTP route): step 1/2.</text>
</comment>
<comment type="subunit">
    <text evidence="1">Homotrimer.</text>
</comment>
<comment type="similarity">
    <text evidence="1">Belongs to the dCTP deaminase family.</text>
</comment>
<proteinExistence type="inferred from homology"/>
<keyword id="KW-0378">Hydrolase</keyword>
<keyword id="KW-0546">Nucleotide metabolism</keyword>
<keyword id="KW-0547">Nucleotide-binding</keyword>
<organism>
    <name type="scientific">Pyrobaculum neutrophilum (strain DSM 2338 / JCM 9278 / NBRC 100436 / V24Sta)</name>
    <name type="common">Thermoproteus neutrophilus</name>
    <dbReference type="NCBI Taxonomy" id="444157"/>
    <lineage>
        <taxon>Archaea</taxon>
        <taxon>Thermoproteota</taxon>
        <taxon>Thermoprotei</taxon>
        <taxon>Thermoproteales</taxon>
        <taxon>Thermoproteaceae</taxon>
        <taxon>Pyrobaculum</taxon>
    </lineage>
</organism>
<dbReference type="EC" id="3.5.4.13" evidence="1"/>
<dbReference type="EMBL" id="CP001014">
    <property type="protein sequence ID" value="ACB40220.1"/>
    <property type="molecule type" value="Genomic_DNA"/>
</dbReference>
<dbReference type="RefSeq" id="WP_012350639.1">
    <property type="nucleotide sequence ID" value="NC_010525.1"/>
</dbReference>
<dbReference type="SMR" id="B1Y8Z1"/>
<dbReference type="STRING" id="444157.Tneu_1293"/>
<dbReference type="GeneID" id="6165662"/>
<dbReference type="KEGG" id="tne:Tneu_1293"/>
<dbReference type="eggNOG" id="arCOG04048">
    <property type="taxonomic scope" value="Archaea"/>
</dbReference>
<dbReference type="HOGENOM" id="CLU_087476_3_0_2"/>
<dbReference type="OrthoDB" id="33242at2157"/>
<dbReference type="UniPathway" id="UPA00610">
    <property type="reaction ID" value="UER00665"/>
</dbReference>
<dbReference type="Proteomes" id="UP000001694">
    <property type="component" value="Chromosome"/>
</dbReference>
<dbReference type="GO" id="GO:0008829">
    <property type="term" value="F:dCTP deaminase activity"/>
    <property type="evidence" value="ECO:0007669"/>
    <property type="project" value="UniProtKB-UniRule"/>
</dbReference>
<dbReference type="GO" id="GO:0000166">
    <property type="term" value="F:nucleotide binding"/>
    <property type="evidence" value="ECO:0007669"/>
    <property type="project" value="UniProtKB-KW"/>
</dbReference>
<dbReference type="GO" id="GO:0006226">
    <property type="term" value="P:dUMP biosynthetic process"/>
    <property type="evidence" value="ECO:0007669"/>
    <property type="project" value="UniProtKB-UniPathway"/>
</dbReference>
<dbReference type="GO" id="GO:0006229">
    <property type="term" value="P:dUTP biosynthetic process"/>
    <property type="evidence" value="ECO:0007669"/>
    <property type="project" value="UniProtKB-UniRule"/>
</dbReference>
<dbReference type="CDD" id="cd07557">
    <property type="entry name" value="trimeric_dUTPase"/>
    <property type="match status" value="1"/>
</dbReference>
<dbReference type="Gene3D" id="2.70.40.10">
    <property type="match status" value="1"/>
</dbReference>
<dbReference type="HAMAP" id="MF_00146">
    <property type="entry name" value="dCTP_deaminase"/>
    <property type="match status" value="1"/>
</dbReference>
<dbReference type="InterPro" id="IPR011962">
    <property type="entry name" value="dCTP_deaminase"/>
</dbReference>
<dbReference type="InterPro" id="IPR036157">
    <property type="entry name" value="dUTPase-like_sf"/>
</dbReference>
<dbReference type="InterPro" id="IPR033704">
    <property type="entry name" value="dUTPase_trimeric"/>
</dbReference>
<dbReference type="NCBIfam" id="TIGR02274">
    <property type="entry name" value="dCTP_deam"/>
    <property type="match status" value="1"/>
</dbReference>
<dbReference type="PANTHER" id="PTHR42680">
    <property type="entry name" value="DCTP DEAMINASE"/>
    <property type="match status" value="1"/>
</dbReference>
<dbReference type="PANTHER" id="PTHR42680:SF3">
    <property type="entry name" value="DCTP DEAMINASE"/>
    <property type="match status" value="1"/>
</dbReference>
<dbReference type="Pfam" id="PF22769">
    <property type="entry name" value="DCD"/>
    <property type="match status" value="1"/>
</dbReference>
<dbReference type="SUPFAM" id="SSF51283">
    <property type="entry name" value="dUTPase-like"/>
    <property type="match status" value="1"/>
</dbReference>
<gene>
    <name evidence="1" type="primary">dcd</name>
    <name type="ordered locus">Tneu_1293</name>
</gene>
<feature type="chain" id="PRO_1000117990" description="dCTP deaminase">
    <location>
        <begin position="1"/>
        <end position="176"/>
    </location>
</feature>
<feature type="active site" description="Proton donor/acceptor" evidence="1">
    <location>
        <position position="125"/>
    </location>
</feature>
<feature type="binding site" evidence="1">
    <location>
        <begin position="99"/>
        <end position="104"/>
    </location>
    <ligand>
        <name>dCTP</name>
        <dbReference type="ChEBI" id="CHEBI:61481"/>
    </ligand>
</feature>
<feature type="binding site" evidence="1">
    <location>
        <position position="115"/>
    </location>
    <ligand>
        <name>dCTP</name>
        <dbReference type="ChEBI" id="CHEBI:61481"/>
    </ligand>
</feature>
<feature type="binding site" evidence="1">
    <location>
        <position position="163"/>
    </location>
    <ligand>
        <name>dCTP</name>
        <dbReference type="ChEBI" id="CHEBI:61481"/>
    </ligand>
</feature>
<evidence type="ECO:0000255" key="1">
    <source>
        <dbReference type="HAMAP-Rule" id="MF_00146"/>
    </source>
</evidence>
<sequence>MILANDELKRLISLGRLKVEPLAPDTVRENGLDLRIGGEYAIYAYEGAVVKPCELDSARPLFRVVKADEVVIPPRNFVLLTTEEYVKMPDDVVGLANLRSTLARYGLVIPPTVVDAGFEGNITIEVVNESPNTIVLRRGMRFLHLILVKAEGRALYSGTYQGQRGVTPPKGLRGEC</sequence>
<reference key="1">
    <citation type="submission" date="2008-03" db="EMBL/GenBank/DDBJ databases">
        <title>Complete sequence of Thermoproteus neutrophilus V24Sta.</title>
        <authorList>
            <consortium name="US DOE Joint Genome Institute"/>
            <person name="Copeland A."/>
            <person name="Lucas S."/>
            <person name="Lapidus A."/>
            <person name="Glavina del Rio T."/>
            <person name="Dalin E."/>
            <person name="Tice H."/>
            <person name="Bruce D."/>
            <person name="Goodwin L."/>
            <person name="Pitluck S."/>
            <person name="Sims D."/>
            <person name="Brettin T."/>
            <person name="Detter J.C."/>
            <person name="Han C."/>
            <person name="Kuske C.R."/>
            <person name="Schmutz J."/>
            <person name="Larimer F."/>
            <person name="Land M."/>
            <person name="Hauser L."/>
            <person name="Kyrpides N."/>
            <person name="Mikhailova N."/>
            <person name="Biddle J.F."/>
            <person name="Zhang Z."/>
            <person name="Fitz-Gibbon S.T."/>
            <person name="Lowe T.M."/>
            <person name="Saltikov C."/>
            <person name="House C.H."/>
            <person name="Richardson P."/>
        </authorList>
    </citation>
    <scope>NUCLEOTIDE SEQUENCE [LARGE SCALE GENOMIC DNA]</scope>
    <source>
        <strain>DSM 2338 / JCM 9278 / NBRC 100436 / V24Sta</strain>
    </source>
</reference>
<protein>
    <recommendedName>
        <fullName evidence="1">dCTP deaminase</fullName>
        <ecNumber evidence="1">3.5.4.13</ecNumber>
    </recommendedName>
    <alternativeName>
        <fullName evidence="1">Deoxycytidine triphosphate deaminase</fullName>
    </alternativeName>
</protein>